<dbReference type="EC" id="2.7.11.1"/>
<dbReference type="EMBL" id="X99325">
    <property type="protein sequence ID" value="CAA67700.1"/>
    <property type="molecule type" value="mRNA"/>
</dbReference>
<dbReference type="EMBL" id="D63780">
    <property type="protein sequence ID" value="BAA20420.1"/>
    <property type="molecule type" value="mRNA"/>
</dbReference>
<dbReference type="EMBL" id="AK291808">
    <property type="protein sequence ID" value="BAF84497.1"/>
    <property type="molecule type" value="mRNA"/>
</dbReference>
<dbReference type="EMBL" id="AK291947">
    <property type="protein sequence ID" value="BAF84636.1"/>
    <property type="molecule type" value="mRNA"/>
</dbReference>
<dbReference type="EMBL" id="AK315966">
    <property type="protein sequence ID" value="BAH14337.1"/>
    <property type="molecule type" value="mRNA"/>
</dbReference>
<dbReference type="EMBL" id="BT019961">
    <property type="protein sequence ID" value="AAV38764.1"/>
    <property type="molecule type" value="mRNA"/>
</dbReference>
<dbReference type="EMBL" id="AC110299">
    <property type="protein sequence ID" value="AAY14683.1"/>
    <property type="molecule type" value="Genomic_DNA"/>
</dbReference>
<dbReference type="EMBL" id="DQ093965">
    <property type="protein sequence ID" value="AAY88740.1"/>
    <property type="molecule type" value="Genomic_DNA"/>
</dbReference>
<dbReference type="EMBL" id="CH471063">
    <property type="protein sequence ID" value="EAW71265.1"/>
    <property type="molecule type" value="Genomic_DNA"/>
</dbReference>
<dbReference type="EMBL" id="BC007852">
    <property type="protein sequence ID" value="AAH07852.1"/>
    <property type="molecule type" value="mRNA"/>
</dbReference>
<dbReference type="EMBL" id="BC091505">
    <property type="protein sequence ID" value="AAH91505.1"/>
    <property type="molecule type" value="mRNA"/>
</dbReference>
<dbReference type="CCDS" id="CCDS2549.1">
    <molecule id="O00506-1"/>
</dbReference>
<dbReference type="CCDS" id="CCDS63199.1">
    <molecule id="O00506-3"/>
</dbReference>
<dbReference type="CCDS" id="CCDS63200.1">
    <molecule id="O00506-2"/>
</dbReference>
<dbReference type="PIR" id="S71886">
    <property type="entry name" value="S71886"/>
</dbReference>
<dbReference type="RefSeq" id="NP_001258906.1">
    <molecule id="O00506-1"/>
    <property type="nucleotide sequence ID" value="NM_001271977.2"/>
</dbReference>
<dbReference type="RefSeq" id="NP_001258907.1">
    <molecule id="O00506-1"/>
    <property type="nucleotide sequence ID" value="NM_001271978.2"/>
</dbReference>
<dbReference type="RefSeq" id="NP_001258908.1">
    <molecule id="O00506-2"/>
    <property type="nucleotide sequence ID" value="NM_001271979.2"/>
</dbReference>
<dbReference type="RefSeq" id="NP_001258909.1">
    <molecule id="O00506-2"/>
    <property type="nucleotide sequence ID" value="NM_001271980.2"/>
</dbReference>
<dbReference type="RefSeq" id="NP_001269234.1">
    <molecule id="O00506-3"/>
    <property type="nucleotide sequence ID" value="NM_001282305.1"/>
</dbReference>
<dbReference type="RefSeq" id="NP_001269236.1">
    <molecule id="O00506-3"/>
    <property type="nucleotide sequence ID" value="NM_001282307.2"/>
</dbReference>
<dbReference type="RefSeq" id="NP_001269237.1">
    <molecule id="O00506-3"/>
    <property type="nucleotide sequence ID" value="NM_001282308.2"/>
</dbReference>
<dbReference type="RefSeq" id="NP_006365.2">
    <molecule id="O00506-1"/>
    <property type="nucleotide sequence ID" value="NM_006374.4"/>
</dbReference>
<dbReference type="PDB" id="2XIK">
    <property type="method" value="X-ray"/>
    <property type="resolution" value="1.97 A"/>
    <property type="chains" value="A=1-293"/>
</dbReference>
<dbReference type="PDB" id="3W8H">
    <property type="method" value="X-ray"/>
    <property type="resolution" value="2.43 A"/>
    <property type="chains" value="B=355-426"/>
</dbReference>
<dbReference type="PDB" id="4NZW">
    <property type="method" value="X-ray"/>
    <property type="resolution" value="3.58 A"/>
    <property type="chains" value="B=1-293"/>
</dbReference>
<dbReference type="PDB" id="7Z4V">
    <property type="method" value="X-ray"/>
    <property type="resolution" value="1.64 A"/>
    <property type="chains" value="A=1-294"/>
</dbReference>
<dbReference type="PDBsum" id="2XIK"/>
<dbReference type="PDBsum" id="3W8H"/>
<dbReference type="PDBsum" id="4NZW"/>
<dbReference type="PDBsum" id="7Z4V"/>
<dbReference type="SMR" id="O00506"/>
<dbReference type="BioGRID" id="115757">
    <property type="interactions" value="108"/>
</dbReference>
<dbReference type="DIP" id="DIP-34269N"/>
<dbReference type="FunCoup" id="O00506">
    <property type="interactions" value="2309"/>
</dbReference>
<dbReference type="IntAct" id="O00506">
    <property type="interactions" value="85"/>
</dbReference>
<dbReference type="MINT" id="O00506"/>
<dbReference type="STRING" id="9606.ENSP00000325748"/>
<dbReference type="BindingDB" id="O00506"/>
<dbReference type="ChEMBL" id="CHEMBL5552"/>
<dbReference type="DrugCentral" id="O00506"/>
<dbReference type="GlyGen" id="O00506">
    <property type="glycosylation" value="1 site, 1 O-linked glycan (1 site)"/>
</dbReference>
<dbReference type="iPTMnet" id="O00506"/>
<dbReference type="PhosphoSitePlus" id="O00506"/>
<dbReference type="SwissPalm" id="O00506"/>
<dbReference type="BioMuta" id="STK25"/>
<dbReference type="jPOST" id="O00506"/>
<dbReference type="MassIVE" id="O00506"/>
<dbReference type="PaxDb" id="9606-ENSP00000325748"/>
<dbReference type="PeptideAtlas" id="O00506"/>
<dbReference type="PRIDE" id="O00506"/>
<dbReference type="ProteomicsDB" id="1868"/>
<dbReference type="ProteomicsDB" id="47947">
    <molecule id="O00506-1"/>
</dbReference>
<dbReference type="ProteomicsDB" id="7036"/>
<dbReference type="Pumba" id="O00506"/>
<dbReference type="Antibodypedia" id="34565">
    <property type="antibodies" value="244 antibodies from 33 providers"/>
</dbReference>
<dbReference type="DNASU" id="10494"/>
<dbReference type="Ensembl" id="ENST00000316586.9">
    <molecule id="O00506-1"/>
    <property type="protein sequence ID" value="ENSP00000325748.4"/>
    <property type="gene ID" value="ENSG00000115694.15"/>
</dbReference>
<dbReference type="Ensembl" id="ENST00000401869.5">
    <molecule id="O00506-1"/>
    <property type="protein sequence ID" value="ENSP00000385687.1"/>
    <property type="gene ID" value="ENSG00000115694.15"/>
</dbReference>
<dbReference type="Ensembl" id="ENST00000403346.7">
    <molecule id="O00506-1"/>
    <property type="protein sequence ID" value="ENSP00000384162.3"/>
    <property type="gene ID" value="ENSG00000115694.15"/>
</dbReference>
<dbReference type="Ensembl" id="ENST00000405585.5">
    <molecule id="O00506-2"/>
    <property type="protein sequence ID" value="ENSP00000385541.1"/>
    <property type="gene ID" value="ENSG00000115694.15"/>
</dbReference>
<dbReference type="Ensembl" id="ENST00000405883.7">
    <molecule id="O00506-2"/>
    <property type="protein sequence ID" value="ENSP00000384444.3"/>
    <property type="gene ID" value="ENSG00000115694.15"/>
</dbReference>
<dbReference type="Ensembl" id="ENST00000535007.5">
    <molecule id="O00506-3"/>
    <property type="protein sequence ID" value="ENSP00000446008.1"/>
    <property type="gene ID" value="ENSG00000115694.15"/>
</dbReference>
<dbReference type="Ensembl" id="ENST00000543554.5">
    <molecule id="O00506-3"/>
    <property type="protein sequence ID" value="ENSP00000444886.1"/>
    <property type="gene ID" value="ENSG00000115694.15"/>
</dbReference>
<dbReference type="GeneID" id="10494"/>
<dbReference type="KEGG" id="hsa:10494"/>
<dbReference type="MANE-Select" id="ENST00000316586.9">
    <property type="protein sequence ID" value="ENSP00000325748.4"/>
    <property type="RefSeq nucleotide sequence ID" value="NM_001271977.2"/>
    <property type="RefSeq protein sequence ID" value="NP_001258906.1"/>
</dbReference>
<dbReference type="UCSC" id="uc002wbm.5">
    <molecule id="O00506-1"/>
    <property type="organism name" value="human"/>
</dbReference>
<dbReference type="AGR" id="HGNC:11404"/>
<dbReference type="CTD" id="10494"/>
<dbReference type="DisGeNET" id="10494"/>
<dbReference type="GeneCards" id="STK25"/>
<dbReference type="HGNC" id="HGNC:11404">
    <property type="gene designation" value="STK25"/>
</dbReference>
<dbReference type="HPA" id="ENSG00000115694">
    <property type="expression patterns" value="Tissue enhanced (skeletal)"/>
</dbReference>
<dbReference type="MIM" id="602255">
    <property type="type" value="gene"/>
</dbReference>
<dbReference type="neXtProt" id="NX_O00506"/>
<dbReference type="OpenTargets" id="ENSG00000115694"/>
<dbReference type="PharmGKB" id="PA36211"/>
<dbReference type="VEuPathDB" id="HostDB:ENSG00000115694"/>
<dbReference type="eggNOG" id="KOG0201">
    <property type="taxonomic scope" value="Eukaryota"/>
</dbReference>
<dbReference type="GeneTree" id="ENSGT00940000153476"/>
<dbReference type="InParanoid" id="O00506"/>
<dbReference type="OMA" id="ACEPIKR"/>
<dbReference type="OrthoDB" id="8693905at2759"/>
<dbReference type="PAN-GO" id="O00506">
    <property type="GO annotations" value="3 GO annotations based on evolutionary models"/>
</dbReference>
<dbReference type="PhylomeDB" id="O00506"/>
<dbReference type="TreeFam" id="TF354217"/>
<dbReference type="PathwayCommons" id="O00506"/>
<dbReference type="SignaLink" id="O00506"/>
<dbReference type="SIGNOR" id="O00506"/>
<dbReference type="BioGRID-ORCS" id="10494">
    <property type="hits" value="12 hits in 1190 CRISPR screens"/>
</dbReference>
<dbReference type="ChiTaRS" id="STK25">
    <property type="organism name" value="human"/>
</dbReference>
<dbReference type="EvolutionaryTrace" id="O00506"/>
<dbReference type="GeneWiki" id="STK25"/>
<dbReference type="GenomeRNAi" id="10494"/>
<dbReference type="Pharos" id="O00506">
    <property type="development level" value="Tchem"/>
</dbReference>
<dbReference type="PRO" id="PR:O00506"/>
<dbReference type="Proteomes" id="UP000005640">
    <property type="component" value="Chromosome 2"/>
</dbReference>
<dbReference type="RNAct" id="O00506">
    <property type="molecule type" value="protein"/>
</dbReference>
<dbReference type="Bgee" id="ENSG00000115694">
    <property type="expression patterns" value="Expressed in hindlimb stylopod muscle and 183 other cell types or tissues"/>
</dbReference>
<dbReference type="ExpressionAtlas" id="O00506">
    <property type="expression patterns" value="baseline and differential"/>
</dbReference>
<dbReference type="GO" id="GO:0005737">
    <property type="term" value="C:cytoplasm"/>
    <property type="evidence" value="ECO:0000314"/>
    <property type="project" value="UniProtKB"/>
</dbReference>
<dbReference type="GO" id="GO:0070062">
    <property type="term" value="C:extracellular exosome"/>
    <property type="evidence" value="ECO:0007005"/>
    <property type="project" value="UniProtKB"/>
</dbReference>
<dbReference type="GO" id="GO:0090443">
    <property type="term" value="C:FAR/SIN/STRIPAK complex"/>
    <property type="evidence" value="ECO:0000314"/>
    <property type="project" value="UniProtKB"/>
</dbReference>
<dbReference type="GO" id="GO:0005794">
    <property type="term" value="C:Golgi apparatus"/>
    <property type="evidence" value="ECO:0007669"/>
    <property type="project" value="UniProtKB-SubCell"/>
</dbReference>
<dbReference type="GO" id="GO:0005524">
    <property type="term" value="F:ATP binding"/>
    <property type="evidence" value="ECO:0007669"/>
    <property type="project" value="UniProtKB-KW"/>
</dbReference>
<dbReference type="GO" id="GO:0046872">
    <property type="term" value="F:metal ion binding"/>
    <property type="evidence" value="ECO:0007669"/>
    <property type="project" value="UniProtKB-KW"/>
</dbReference>
<dbReference type="GO" id="GO:0042803">
    <property type="term" value="F:protein homodimerization activity"/>
    <property type="evidence" value="ECO:0000314"/>
    <property type="project" value="UniProtKB"/>
</dbReference>
<dbReference type="GO" id="GO:0004672">
    <property type="term" value="F:protein kinase activity"/>
    <property type="evidence" value="ECO:0000304"/>
    <property type="project" value="ProtInc"/>
</dbReference>
<dbReference type="GO" id="GO:0106310">
    <property type="term" value="F:protein serine kinase activity"/>
    <property type="evidence" value="ECO:0007669"/>
    <property type="project" value="RHEA"/>
</dbReference>
<dbReference type="GO" id="GO:0004674">
    <property type="term" value="F:protein serine/threonine kinase activity"/>
    <property type="evidence" value="ECO:0000318"/>
    <property type="project" value="GO_Central"/>
</dbReference>
<dbReference type="GO" id="GO:0007409">
    <property type="term" value="P:axonogenesis"/>
    <property type="evidence" value="ECO:0007669"/>
    <property type="project" value="Ensembl"/>
</dbReference>
<dbReference type="GO" id="GO:0034599">
    <property type="term" value="P:cellular response to oxidative stress"/>
    <property type="evidence" value="ECO:0000314"/>
    <property type="project" value="UniProtKB"/>
</dbReference>
<dbReference type="GO" id="GO:0051683">
    <property type="term" value="P:establishment of Golgi localization"/>
    <property type="evidence" value="ECO:0000315"/>
    <property type="project" value="UniProtKB"/>
</dbReference>
<dbReference type="GO" id="GO:0007163">
    <property type="term" value="P:establishment or maintenance of cell polarity"/>
    <property type="evidence" value="ECO:0007669"/>
    <property type="project" value="Ensembl"/>
</dbReference>
<dbReference type="GO" id="GO:0051645">
    <property type="term" value="P:Golgi localization"/>
    <property type="evidence" value="ECO:0000314"/>
    <property type="project" value="UniProtKB"/>
</dbReference>
<dbReference type="GO" id="GO:0090168">
    <property type="term" value="P:Golgi reassembly"/>
    <property type="evidence" value="ECO:0000315"/>
    <property type="project" value="UniProtKB"/>
</dbReference>
<dbReference type="GO" id="GO:0035556">
    <property type="term" value="P:intracellular signal transduction"/>
    <property type="evidence" value="ECO:0000318"/>
    <property type="project" value="GO_Central"/>
</dbReference>
<dbReference type="GO" id="GO:0036481">
    <property type="term" value="P:intrinsic apoptotic signaling pathway in response to hydrogen peroxide"/>
    <property type="evidence" value="ECO:0000316"/>
    <property type="project" value="UniProtKB"/>
</dbReference>
<dbReference type="GO" id="GO:0050772">
    <property type="term" value="P:positive regulation of axonogenesis"/>
    <property type="evidence" value="ECO:0007669"/>
    <property type="project" value="Ensembl"/>
</dbReference>
<dbReference type="GO" id="GO:0032874">
    <property type="term" value="P:positive regulation of stress-activated MAPK cascade"/>
    <property type="evidence" value="ECO:0000314"/>
    <property type="project" value="UniProtKB"/>
</dbReference>
<dbReference type="GO" id="GO:0046777">
    <property type="term" value="P:protein autophosphorylation"/>
    <property type="evidence" value="ECO:0000314"/>
    <property type="project" value="UniProtKB"/>
</dbReference>
<dbReference type="GO" id="GO:0006468">
    <property type="term" value="P:protein phosphorylation"/>
    <property type="evidence" value="ECO:0000314"/>
    <property type="project" value="UniProtKB"/>
</dbReference>
<dbReference type="GO" id="GO:0006979">
    <property type="term" value="P:response to oxidative stress"/>
    <property type="evidence" value="ECO:0000304"/>
    <property type="project" value="ProtInc"/>
</dbReference>
<dbReference type="GO" id="GO:0007165">
    <property type="term" value="P:signal transduction"/>
    <property type="evidence" value="ECO:0000304"/>
    <property type="project" value="ProtInc"/>
</dbReference>
<dbReference type="CDD" id="cd06642">
    <property type="entry name" value="STKc_STK25"/>
    <property type="match status" value="1"/>
</dbReference>
<dbReference type="FunFam" id="1.10.510.10:FF:000411">
    <property type="entry name" value="Probable Ste20-like kinase Don3"/>
    <property type="match status" value="1"/>
</dbReference>
<dbReference type="FunFam" id="3.30.200.20:FF:000092">
    <property type="entry name" value="Serine/threonine-protein kinase 24"/>
    <property type="match status" value="1"/>
</dbReference>
<dbReference type="FunFam" id="1.10.12.70:FF:000003">
    <property type="entry name" value="Serine/threonine-protein kinase 25"/>
    <property type="match status" value="1"/>
</dbReference>
<dbReference type="Gene3D" id="1.10.12.70">
    <property type="match status" value="1"/>
</dbReference>
<dbReference type="Gene3D" id="3.30.200.20">
    <property type="entry name" value="Phosphorylase Kinase, domain 1"/>
    <property type="match status" value="1"/>
</dbReference>
<dbReference type="Gene3D" id="1.10.510.10">
    <property type="entry name" value="Transferase(Phosphotransferase) domain 1"/>
    <property type="match status" value="1"/>
</dbReference>
<dbReference type="InterPro" id="IPR011009">
    <property type="entry name" value="Kinase-like_dom_sf"/>
</dbReference>
<dbReference type="InterPro" id="IPR046409">
    <property type="entry name" value="PDC10_dimerisation_sf"/>
</dbReference>
<dbReference type="InterPro" id="IPR048288">
    <property type="entry name" value="PDCD10_N"/>
</dbReference>
<dbReference type="InterPro" id="IPR000719">
    <property type="entry name" value="Prot_kinase_dom"/>
</dbReference>
<dbReference type="InterPro" id="IPR017441">
    <property type="entry name" value="Protein_kinase_ATP_BS"/>
</dbReference>
<dbReference type="InterPro" id="IPR050629">
    <property type="entry name" value="STE20/SPS1-PAK"/>
</dbReference>
<dbReference type="InterPro" id="IPR035060">
    <property type="entry name" value="STK_STK25"/>
</dbReference>
<dbReference type="PANTHER" id="PTHR48012:SF9">
    <property type="entry name" value="SERINE_THREONINE-PROTEIN KINASE 25"/>
    <property type="match status" value="1"/>
</dbReference>
<dbReference type="PANTHER" id="PTHR48012">
    <property type="entry name" value="STERILE20-LIKE KINASE, ISOFORM B-RELATED"/>
    <property type="match status" value="1"/>
</dbReference>
<dbReference type="Pfam" id="PF20929">
    <property type="entry name" value="PDCD10_N"/>
    <property type="match status" value="1"/>
</dbReference>
<dbReference type="Pfam" id="PF00069">
    <property type="entry name" value="Pkinase"/>
    <property type="match status" value="1"/>
</dbReference>
<dbReference type="SMART" id="SM00220">
    <property type="entry name" value="S_TKc"/>
    <property type="match status" value="1"/>
</dbReference>
<dbReference type="SUPFAM" id="SSF56112">
    <property type="entry name" value="Protein kinase-like (PK-like)"/>
    <property type="match status" value="1"/>
</dbReference>
<dbReference type="PROSITE" id="PS00107">
    <property type="entry name" value="PROTEIN_KINASE_ATP"/>
    <property type="match status" value="1"/>
</dbReference>
<dbReference type="PROSITE" id="PS50011">
    <property type="entry name" value="PROTEIN_KINASE_DOM"/>
    <property type="match status" value="1"/>
</dbReference>
<reference key="1">
    <citation type="journal article" date="1996" name="EMBO J.">
        <title>Activation of a human Ste20-like kinase by oxidant stress defines a novel stress response pathway.</title>
        <authorList>
            <person name="Pombo C.M."/>
            <person name="Bonventre J.V."/>
            <person name="Molnar A."/>
            <person name="Kyriakis J."/>
            <person name="Force T."/>
        </authorList>
    </citation>
    <scope>NUCLEOTIDE SEQUENCE [MRNA] (ISOFORM 1)</scope>
</reference>
<reference key="2">
    <citation type="journal article" date="1997" name="Oncogene">
        <title>YSK1, a novel mammalian protein kinase structurally related to Ste20 and SPS1, but is not involved in the known MAPK pathways.</title>
        <authorList>
            <person name="Osada S."/>
            <person name="Izawa M."/>
            <person name="Saito R."/>
            <person name="Mizuno K."/>
            <person name="Suzuki A."/>
            <person name="Hirai S."/>
            <person name="Ohno S."/>
        </authorList>
    </citation>
    <scope>NUCLEOTIDE SEQUENCE [MRNA] (ISOFORM 1)</scope>
</reference>
<reference key="3">
    <citation type="submission" date="2004-10" db="EMBL/GenBank/DDBJ databases">
        <title>Cloning of human full-length CDSs in BD Creator(TM) system donor vector.</title>
        <authorList>
            <person name="Kalnine N."/>
            <person name="Chen X."/>
            <person name="Rolfs A."/>
            <person name="Halleck A."/>
            <person name="Hines L."/>
            <person name="Eisenstein S."/>
            <person name="Koundinya M."/>
            <person name="Raphael J."/>
            <person name="Moreira D."/>
            <person name="Kelley T."/>
            <person name="LaBaer J."/>
            <person name="Lin Y."/>
            <person name="Phelan M."/>
            <person name="Farmer A."/>
        </authorList>
    </citation>
    <scope>NUCLEOTIDE SEQUENCE [LARGE SCALE MRNA] (ISOFORM 1)</scope>
</reference>
<reference key="4">
    <citation type="journal article" date="2004" name="Nat. Genet.">
        <title>Complete sequencing and characterization of 21,243 full-length human cDNAs.</title>
        <authorList>
            <person name="Ota T."/>
            <person name="Suzuki Y."/>
            <person name="Nishikawa T."/>
            <person name="Otsuki T."/>
            <person name="Sugiyama T."/>
            <person name="Irie R."/>
            <person name="Wakamatsu A."/>
            <person name="Hayashi K."/>
            <person name="Sato H."/>
            <person name="Nagai K."/>
            <person name="Kimura K."/>
            <person name="Makita H."/>
            <person name="Sekine M."/>
            <person name="Obayashi M."/>
            <person name="Nishi T."/>
            <person name="Shibahara T."/>
            <person name="Tanaka T."/>
            <person name="Ishii S."/>
            <person name="Yamamoto J."/>
            <person name="Saito K."/>
            <person name="Kawai Y."/>
            <person name="Isono Y."/>
            <person name="Nakamura Y."/>
            <person name="Nagahari K."/>
            <person name="Murakami K."/>
            <person name="Yasuda T."/>
            <person name="Iwayanagi T."/>
            <person name="Wagatsuma M."/>
            <person name="Shiratori A."/>
            <person name="Sudo H."/>
            <person name="Hosoiri T."/>
            <person name="Kaku Y."/>
            <person name="Kodaira H."/>
            <person name="Kondo H."/>
            <person name="Sugawara M."/>
            <person name="Takahashi M."/>
            <person name="Kanda K."/>
            <person name="Yokoi T."/>
            <person name="Furuya T."/>
            <person name="Kikkawa E."/>
            <person name="Omura Y."/>
            <person name="Abe K."/>
            <person name="Kamihara K."/>
            <person name="Katsuta N."/>
            <person name="Sato K."/>
            <person name="Tanikawa M."/>
            <person name="Yamazaki M."/>
            <person name="Ninomiya K."/>
            <person name="Ishibashi T."/>
            <person name="Yamashita H."/>
            <person name="Murakawa K."/>
            <person name="Fujimori K."/>
            <person name="Tanai H."/>
            <person name="Kimata M."/>
            <person name="Watanabe M."/>
            <person name="Hiraoka S."/>
            <person name="Chiba Y."/>
            <person name="Ishida S."/>
            <person name="Ono Y."/>
            <person name="Takiguchi S."/>
            <person name="Watanabe S."/>
            <person name="Yosida M."/>
            <person name="Hotuta T."/>
            <person name="Kusano J."/>
            <person name="Kanehori K."/>
            <person name="Takahashi-Fujii A."/>
            <person name="Hara H."/>
            <person name="Tanase T.-O."/>
            <person name="Nomura Y."/>
            <person name="Togiya S."/>
            <person name="Komai F."/>
            <person name="Hara R."/>
            <person name="Takeuchi K."/>
            <person name="Arita M."/>
            <person name="Imose N."/>
            <person name="Musashino K."/>
            <person name="Yuuki H."/>
            <person name="Oshima A."/>
            <person name="Sasaki N."/>
            <person name="Aotsuka S."/>
            <person name="Yoshikawa Y."/>
            <person name="Matsunawa H."/>
            <person name="Ichihara T."/>
            <person name="Shiohata N."/>
            <person name="Sano S."/>
            <person name="Moriya S."/>
            <person name="Momiyama H."/>
            <person name="Satoh N."/>
            <person name="Takami S."/>
            <person name="Terashima Y."/>
            <person name="Suzuki O."/>
            <person name="Nakagawa S."/>
            <person name="Senoh A."/>
            <person name="Mizoguchi H."/>
            <person name="Goto Y."/>
            <person name="Shimizu F."/>
            <person name="Wakebe H."/>
            <person name="Hishigaki H."/>
            <person name="Watanabe T."/>
            <person name="Sugiyama A."/>
            <person name="Takemoto M."/>
            <person name="Kawakami B."/>
            <person name="Yamazaki M."/>
            <person name="Watanabe K."/>
            <person name="Kumagai A."/>
            <person name="Itakura S."/>
            <person name="Fukuzumi Y."/>
            <person name="Fujimori Y."/>
            <person name="Komiyama M."/>
            <person name="Tashiro H."/>
            <person name="Tanigami A."/>
            <person name="Fujiwara T."/>
            <person name="Ono T."/>
            <person name="Yamada K."/>
            <person name="Fujii Y."/>
            <person name="Ozaki K."/>
            <person name="Hirao M."/>
            <person name="Ohmori Y."/>
            <person name="Kawabata A."/>
            <person name="Hikiji T."/>
            <person name="Kobatake N."/>
            <person name="Inagaki H."/>
            <person name="Ikema Y."/>
            <person name="Okamoto S."/>
            <person name="Okitani R."/>
            <person name="Kawakami T."/>
            <person name="Noguchi S."/>
            <person name="Itoh T."/>
            <person name="Shigeta K."/>
            <person name="Senba T."/>
            <person name="Matsumura K."/>
            <person name="Nakajima Y."/>
            <person name="Mizuno T."/>
            <person name="Morinaga M."/>
            <person name="Sasaki M."/>
            <person name="Togashi T."/>
            <person name="Oyama M."/>
            <person name="Hata H."/>
            <person name="Watanabe M."/>
            <person name="Komatsu T."/>
            <person name="Mizushima-Sugano J."/>
            <person name="Satoh T."/>
            <person name="Shirai Y."/>
            <person name="Takahashi Y."/>
            <person name="Nakagawa K."/>
            <person name="Okumura K."/>
            <person name="Nagase T."/>
            <person name="Nomura N."/>
            <person name="Kikuchi H."/>
            <person name="Masuho Y."/>
            <person name="Yamashita R."/>
            <person name="Nakai K."/>
            <person name="Yada T."/>
            <person name="Nakamura Y."/>
            <person name="Ohara O."/>
            <person name="Isogai T."/>
            <person name="Sugano S."/>
        </authorList>
    </citation>
    <scope>NUCLEOTIDE SEQUENCE [LARGE SCALE MRNA] (ISOFORMS 1; 2 AND 3)</scope>
    <source>
        <tissue>Amygdala</tissue>
    </source>
</reference>
<reference key="5">
    <citation type="submission" date="2005-06" db="EMBL/GenBank/DDBJ databases">
        <authorList>
            <consortium name="NIEHS SNPs program"/>
        </authorList>
    </citation>
    <scope>NUCLEOTIDE SEQUENCE [GENOMIC DNA]</scope>
</reference>
<reference key="6">
    <citation type="journal article" date="2005" name="Nature">
        <title>Generation and annotation of the DNA sequences of human chromosomes 2 and 4.</title>
        <authorList>
            <person name="Hillier L.W."/>
            <person name="Graves T.A."/>
            <person name="Fulton R.S."/>
            <person name="Fulton L.A."/>
            <person name="Pepin K.H."/>
            <person name="Minx P."/>
            <person name="Wagner-McPherson C."/>
            <person name="Layman D."/>
            <person name="Wylie K."/>
            <person name="Sekhon M."/>
            <person name="Becker M.C."/>
            <person name="Fewell G.A."/>
            <person name="Delehaunty K.D."/>
            <person name="Miner T.L."/>
            <person name="Nash W.E."/>
            <person name="Kremitzki C."/>
            <person name="Oddy L."/>
            <person name="Du H."/>
            <person name="Sun H."/>
            <person name="Bradshaw-Cordum H."/>
            <person name="Ali J."/>
            <person name="Carter J."/>
            <person name="Cordes M."/>
            <person name="Harris A."/>
            <person name="Isak A."/>
            <person name="van Brunt A."/>
            <person name="Nguyen C."/>
            <person name="Du F."/>
            <person name="Courtney L."/>
            <person name="Kalicki J."/>
            <person name="Ozersky P."/>
            <person name="Abbott S."/>
            <person name="Armstrong J."/>
            <person name="Belter E.A."/>
            <person name="Caruso L."/>
            <person name="Cedroni M."/>
            <person name="Cotton M."/>
            <person name="Davidson T."/>
            <person name="Desai A."/>
            <person name="Elliott G."/>
            <person name="Erb T."/>
            <person name="Fronick C."/>
            <person name="Gaige T."/>
            <person name="Haakenson W."/>
            <person name="Haglund K."/>
            <person name="Holmes A."/>
            <person name="Harkins R."/>
            <person name="Kim K."/>
            <person name="Kruchowski S.S."/>
            <person name="Strong C.M."/>
            <person name="Grewal N."/>
            <person name="Goyea E."/>
            <person name="Hou S."/>
            <person name="Levy A."/>
            <person name="Martinka S."/>
            <person name="Mead K."/>
            <person name="McLellan M.D."/>
            <person name="Meyer R."/>
            <person name="Randall-Maher J."/>
            <person name="Tomlinson C."/>
            <person name="Dauphin-Kohlberg S."/>
            <person name="Kozlowicz-Reilly A."/>
            <person name="Shah N."/>
            <person name="Swearengen-Shahid S."/>
            <person name="Snider J."/>
            <person name="Strong J.T."/>
            <person name="Thompson J."/>
            <person name="Yoakum M."/>
            <person name="Leonard S."/>
            <person name="Pearman C."/>
            <person name="Trani L."/>
            <person name="Radionenko M."/>
            <person name="Waligorski J.E."/>
            <person name="Wang C."/>
            <person name="Rock S.M."/>
            <person name="Tin-Wollam A.-M."/>
            <person name="Maupin R."/>
            <person name="Latreille P."/>
            <person name="Wendl M.C."/>
            <person name="Yang S.-P."/>
            <person name="Pohl C."/>
            <person name="Wallis J.W."/>
            <person name="Spieth J."/>
            <person name="Bieri T.A."/>
            <person name="Berkowicz N."/>
            <person name="Nelson J.O."/>
            <person name="Osborne J."/>
            <person name="Ding L."/>
            <person name="Meyer R."/>
            <person name="Sabo A."/>
            <person name="Shotland Y."/>
            <person name="Sinha P."/>
            <person name="Wohldmann P.E."/>
            <person name="Cook L.L."/>
            <person name="Hickenbotham M.T."/>
            <person name="Eldred J."/>
            <person name="Williams D."/>
            <person name="Jones T.A."/>
            <person name="She X."/>
            <person name="Ciccarelli F.D."/>
            <person name="Izaurralde E."/>
            <person name="Taylor J."/>
            <person name="Schmutz J."/>
            <person name="Myers R.M."/>
            <person name="Cox D.R."/>
            <person name="Huang X."/>
            <person name="McPherson J.D."/>
            <person name="Mardis E.R."/>
            <person name="Clifton S.W."/>
            <person name="Warren W.C."/>
            <person name="Chinwalla A.T."/>
            <person name="Eddy S.R."/>
            <person name="Marra M.A."/>
            <person name="Ovcharenko I."/>
            <person name="Furey T.S."/>
            <person name="Miller W."/>
            <person name="Eichler E.E."/>
            <person name="Bork P."/>
            <person name="Suyama M."/>
            <person name="Torrents D."/>
            <person name="Waterston R.H."/>
            <person name="Wilson R.K."/>
        </authorList>
    </citation>
    <scope>NUCLEOTIDE SEQUENCE [LARGE SCALE GENOMIC DNA]</scope>
</reference>
<reference key="7">
    <citation type="submission" date="2005-07" db="EMBL/GenBank/DDBJ databases">
        <authorList>
            <person name="Mural R.J."/>
            <person name="Istrail S."/>
            <person name="Sutton G.G."/>
            <person name="Florea L."/>
            <person name="Halpern A.L."/>
            <person name="Mobarry C.M."/>
            <person name="Lippert R."/>
            <person name="Walenz B."/>
            <person name="Shatkay H."/>
            <person name="Dew I."/>
            <person name="Miller J.R."/>
            <person name="Flanigan M.J."/>
            <person name="Edwards N.J."/>
            <person name="Bolanos R."/>
            <person name="Fasulo D."/>
            <person name="Halldorsson B.V."/>
            <person name="Hannenhalli S."/>
            <person name="Turner R."/>
            <person name="Yooseph S."/>
            <person name="Lu F."/>
            <person name="Nusskern D.R."/>
            <person name="Shue B.C."/>
            <person name="Zheng X.H."/>
            <person name="Zhong F."/>
            <person name="Delcher A.L."/>
            <person name="Huson D.H."/>
            <person name="Kravitz S.A."/>
            <person name="Mouchard L."/>
            <person name="Reinert K."/>
            <person name="Remington K.A."/>
            <person name="Clark A.G."/>
            <person name="Waterman M.S."/>
            <person name="Eichler E.E."/>
            <person name="Adams M.D."/>
            <person name="Hunkapiller M.W."/>
            <person name="Myers E.W."/>
            <person name="Venter J.C."/>
        </authorList>
    </citation>
    <scope>NUCLEOTIDE SEQUENCE [LARGE SCALE GENOMIC DNA]</scope>
</reference>
<reference key="8">
    <citation type="journal article" date="2004" name="Genome Res.">
        <title>The status, quality, and expansion of the NIH full-length cDNA project: the Mammalian Gene Collection (MGC).</title>
        <authorList>
            <consortium name="The MGC Project Team"/>
        </authorList>
    </citation>
    <scope>NUCLEOTIDE SEQUENCE [LARGE SCALE MRNA] (ISOFORM 1)</scope>
    <source>
        <tissue>Testis</tissue>
        <tissue>Uterus</tissue>
    </source>
</reference>
<reference key="9">
    <citation type="journal article" date="2004" name="J. Cell Biol.">
        <title>YSK1 is activated by the Golgi matrix protein GM130 and plays a role in cell migration through its substrate 14-3-3zeta.</title>
        <authorList>
            <person name="Preisinger C."/>
            <person name="Short B."/>
            <person name="De Corte V."/>
            <person name="Bruyneel E."/>
            <person name="Haas A."/>
            <person name="Kopajtich R."/>
            <person name="Gettemans J."/>
            <person name="Barr F.A."/>
        </authorList>
    </citation>
    <scope>FUNCTION</scope>
    <scope>ACTIVITY REGULATION</scope>
    <scope>PHOSPHORYLATION AT THR-174</scope>
    <scope>SUBCELLULAR LOCATION</scope>
    <scope>INTERACTION WITH GOLGA2</scope>
    <scope>MUTAGENESIS OF LYS-49 AND ASP-158</scope>
</reference>
<reference key="10">
    <citation type="journal article" date="2009" name="Mol. Cell. Proteomics">
        <title>A PP2A phosphatase high density interaction network identifies a novel striatin-interacting phosphatase and kinase complex linked to the cerebral cavernous malformation 3 (CCM3) protein.</title>
        <authorList>
            <person name="Goudreault M."/>
            <person name="D'Ambrosio L.M."/>
            <person name="Kean M.J."/>
            <person name="Mullin M.J."/>
            <person name="Larsen B.G."/>
            <person name="Sanchez A."/>
            <person name="Chaudhry S."/>
            <person name="Chen G.I."/>
            <person name="Sicheri F."/>
            <person name="Nesvizhskii A.I."/>
            <person name="Aebersold R."/>
            <person name="Raught B."/>
            <person name="Gingras A.C."/>
        </authorList>
    </citation>
    <scope>INTERACTION WITH CTTNBP2NL</scope>
    <scope>IDENTIFICATION IN STRIPAK COMPLEX</scope>
    <scope>FUNCTION</scope>
</reference>
<reference key="11">
    <citation type="journal article" date="2011" name="BMC Syst. Biol.">
        <title>Initial characterization of the human central proteome.</title>
        <authorList>
            <person name="Burkard T.R."/>
            <person name="Planyavsky M."/>
            <person name="Kaupe I."/>
            <person name="Breitwieser F.P."/>
            <person name="Buerckstuemmer T."/>
            <person name="Bennett K.L."/>
            <person name="Superti-Furga G."/>
            <person name="Colinge J."/>
        </authorList>
    </citation>
    <scope>IDENTIFICATION BY MASS SPECTROMETRY [LARGE SCALE ANALYSIS]</scope>
</reference>
<reference key="12">
    <citation type="journal article" date="2021" name="Mol. Metab.">
        <title>STE20-type kinase TAOK3 regulates hepatic lipid partitioning.</title>
        <authorList>
            <person name="Xia Y."/>
            <person name="Caputo M."/>
            <person name="Cansby E."/>
            <person name="Anand S.K."/>
            <person name="Suett S."/>
            <person name="Henricsson M."/>
            <person name="Porosk R."/>
            <person name="Marschall H.U."/>
            <person name="Blueher M."/>
            <person name="Mahlapuu M."/>
        </authorList>
    </citation>
    <scope>INTERACTION WITH TAOK3</scope>
</reference>
<accession>O00506</accession>
<accession>A8K6Z3</accession>
<accession>A8K7D2</accession>
<accession>B7Z9K1</accession>
<accession>Q15522</accession>
<accession>Q5BJF1</accession>
<evidence type="ECO:0000250" key="1">
    <source>
        <dbReference type="UniProtKB" id="Q9Z2W1"/>
    </source>
</evidence>
<evidence type="ECO:0000255" key="2">
    <source>
        <dbReference type="PROSITE-ProRule" id="PRU00159"/>
    </source>
</evidence>
<evidence type="ECO:0000256" key="3">
    <source>
        <dbReference type="SAM" id="MobiDB-lite"/>
    </source>
</evidence>
<evidence type="ECO:0000269" key="4">
    <source>
    </source>
</evidence>
<evidence type="ECO:0000269" key="5">
    <source>
    </source>
</evidence>
<evidence type="ECO:0000269" key="6">
    <source>
    </source>
</evidence>
<evidence type="ECO:0000303" key="7">
    <source>
    </source>
</evidence>
<evidence type="ECO:0000305" key="8"/>
<evidence type="ECO:0000312" key="9">
    <source>
        <dbReference type="HGNC" id="HGNC:11404"/>
    </source>
</evidence>
<evidence type="ECO:0007829" key="10">
    <source>
        <dbReference type="PDB" id="3W8H"/>
    </source>
</evidence>
<evidence type="ECO:0007829" key="11">
    <source>
        <dbReference type="PDB" id="7Z4V"/>
    </source>
</evidence>
<proteinExistence type="evidence at protein level"/>
<comment type="function">
    <text evidence="4 5">Oxidant stress-activated serine/threonine kinase that may play a role in the response to environmental stress. Targets to the Golgi apparatus where it appears to regulate protein transport events, cell adhesion, and polarity complexes important for cell migration. Part of the striatin-interacting phosphatase and kinase (STRIPAK) complexes. STRIPAK complexes have critical roles in protein (de)phosphorylation and are regulators of multiple signaling pathways including Hippo, MAPK, nuclear receptor and cytoskeleton remodeling. Different types of STRIPAK complexes are involved in a variety of biological processes such as cell growth, differentiation, apoptosis, metabolism and immune regulation (PubMed:18782753).</text>
</comment>
<comment type="catalytic activity">
    <reaction>
        <text>L-seryl-[protein] + ATP = O-phospho-L-seryl-[protein] + ADP + H(+)</text>
        <dbReference type="Rhea" id="RHEA:17989"/>
        <dbReference type="Rhea" id="RHEA-COMP:9863"/>
        <dbReference type="Rhea" id="RHEA-COMP:11604"/>
        <dbReference type="ChEBI" id="CHEBI:15378"/>
        <dbReference type="ChEBI" id="CHEBI:29999"/>
        <dbReference type="ChEBI" id="CHEBI:30616"/>
        <dbReference type="ChEBI" id="CHEBI:83421"/>
        <dbReference type="ChEBI" id="CHEBI:456216"/>
        <dbReference type="EC" id="2.7.11.1"/>
    </reaction>
</comment>
<comment type="catalytic activity">
    <reaction>
        <text>L-threonyl-[protein] + ATP = O-phospho-L-threonyl-[protein] + ADP + H(+)</text>
        <dbReference type="Rhea" id="RHEA:46608"/>
        <dbReference type="Rhea" id="RHEA-COMP:11060"/>
        <dbReference type="Rhea" id="RHEA-COMP:11605"/>
        <dbReference type="ChEBI" id="CHEBI:15378"/>
        <dbReference type="ChEBI" id="CHEBI:30013"/>
        <dbReference type="ChEBI" id="CHEBI:30616"/>
        <dbReference type="ChEBI" id="CHEBI:61977"/>
        <dbReference type="ChEBI" id="CHEBI:456216"/>
        <dbReference type="EC" id="2.7.11.1"/>
    </reaction>
</comment>
<comment type="cofactor">
    <cofactor>
        <name>Mg(2+)</name>
        <dbReference type="ChEBI" id="CHEBI:18420"/>
    </cofactor>
</comment>
<comment type="activity regulation">
    <text evidence="4">Interaction with Golgi matrix protein GOLGA2 leads to autophosphorylation on Thr-174, possibly as a consequence of stabilization of dimer formation. The C-terminal non-catalytic region inhibits the kinase activity.</text>
</comment>
<comment type="subunit">
    <text evidence="5 6">Homodimer. Interacts with CTTNBP2NL (PubMed:18782753). Part of the core of STRIPAK complexes composed of PP2A catalytic and scaffolding subunits, the striatins (PP2A regulatory subunits), the striatin-associated proteins MOB4, STRIP1 and STRIP2, PDCD10 and members of the STE20 kinases, such as STK24 and STK26 (PubMed:18782753). Interacts with TAOK3 (via N-terminus); the interaction promotes STK25 abundance at the level of protein expression and/or stability (PubMed:34634521).</text>
</comment>
<comment type="interaction">
    <interactant intactId="EBI-618295">
        <id>O00506</id>
    </interactant>
    <interactant intactId="EBI-306905">
        <id>Q9Y376</id>
        <label>CAB39</label>
    </interactant>
    <organismsDiffer>false</organismsDiffer>
    <experiments>5</experiments>
</comment>
<comment type="interaction">
    <interactant intactId="EBI-618295">
        <id>O00506</id>
    </interactant>
    <interactant intactId="EBI-748961">
        <id>O95273</id>
        <label>CCNDBP1</label>
    </interactant>
    <organismsDiffer>false</organismsDiffer>
    <experiments>3</experiments>
</comment>
<comment type="interaction">
    <interactant intactId="EBI-618295">
        <id>O00506</id>
    </interactant>
    <interactant intactId="EBI-739624">
        <id>Q8NHQ1</id>
        <label>CEP70</label>
    </interactant>
    <organismsDiffer>false</organismsDiffer>
    <experiments>3</experiments>
</comment>
<comment type="interaction">
    <interactant intactId="EBI-618295">
        <id>O00506</id>
    </interactant>
    <interactant intactId="EBI-618309">
        <id>Q08379</id>
        <label>GOLGA2</label>
    </interactant>
    <organismsDiffer>false</organismsDiffer>
    <experiments>17</experiments>
</comment>
<comment type="interaction">
    <interactant intactId="EBI-618295">
        <id>O00506</id>
    </interactant>
    <interactant intactId="EBI-5916454">
        <id>A6NEM1</id>
        <label>GOLGA6L9</label>
    </interactant>
    <organismsDiffer>false</organismsDiffer>
    <experiments>3</experiments>
</comment>
<comment type="interaction">
    <interactant intactId="EBI-618295">
        <id>O00506</id>
    </interactant>
    <interactant intactId="EBI-8638439">
        <id>Q8IYA8</id>
        <label>IHO1</label>
    </interactant>
    <organismsDiffer>false</organismsDiffer>
    <experiments>3</experiments>
</comment>
<comment type="interaction">
    <interactant intactId="EBI-618295">
        <id>O00506</id>
    </interactant>
    <interactant intactId="EBI-740195">
        <id>Q9BUL8</id>
        <label>PDCD10</label>
    </interactant>
    <organismsDiffer>false</organismsDiffer>
    <experiments>33</experiments>
</comment>
<comment type="interaction">
    <interactant intactId="EBI-618295">
        <id>O00506</id>
    </interactant>
    <interactant intactId="EBI-1046642">
        <id>O43815</id>
        <label>STRN</label>
    </interactant>
    <organismsDiffer>false</organismsDiffer>
    <experiments>7</experiments>
</comment>
<comment type="interaction">
    <interactant intactId="EBI-618295">
        <id>O00506</id>
    </interactant>
    <interactant intactId="EBI-719493">
        <id>P14373</id>
        <label>TRIM27</label>
    </interactant>
    <organismsDiffer>false</organismsDiffer>
    <experiments>6</experiments>
</comment>
<comment type="interaction">
    <interactant intactId="EBI-618295">
        <id>O00506</id>
    </interactant>
    <interactant intactId="EBI-347088">
        <id>P63104</id>
        <label>YWHAZ</label>
    </interactant>
    <organismsDiffer>false</organismsDiffer>
    <experiments>2</experiments>
</comment>
<comment type="interaction">
    <interactant intactId="EBI-618295">
        <id>O00506</id>
    </interactant>
    <interactant intactId="EBI-618335">
        <id>Q62839</id>
        <label>Golga2</label>
    </interactant>
    <organismsDiffer>true</organismsDiffer>
    <experiments>2</experiments>
</comment>
<comment type="subcellular location">
    <subcellularLocation>
        <location evidence="4">Cytoplasm</location>
    </subcellularLocation>
    <subcellularLocation>
        <location evidence="4">Golgi apparatus</location>
    </subcellularLocation>
    <text>Localizes to the Golgi apparatus.</text>
</comment>
<comment type="alternative products">
    <event type="alternative splicing"/>
    <isoform>
        <id>O00506-1</id>
        <name>1</name>
        <sequence type="displayed"/>
    </isoform>
    <isoform>
        <id>O00506-2</id>
        <name>2</name>
        <sequence type="described" ref="VSP_054397"/>
    </isoform>
    <isoform>
        <id>O00506-3</id>
        <name>3</name>
        <sequence type="described" ref="VSP_054683"/>
    </isoform>
</comment>
<comment type="tissue specificity">
    <text>Ubiquitously expressed. Highest levels are found in testis, large intestine, brain and stomach followed by heart and lung.</text>
</comment>
<comment type="similarity">
    <text evidence="8">Belongs to the protein kinase superfamily. STE Ser/Thr protein kinase family. STE20 subfamily.</text>
</comment>
<feature type="chain" id="PRO_0000086713" description="Serine/threonine-protein kinase 25">
    <location>
        <begin position="1"/>
        <end position="426"/>
    </location>
</feature>
<feature type="domain" description="Protein kinase" evidence="2">
    <location>
        <begin position="20"/>
        <end position="270"/>
    </location>
</feature>
<feature type="region of interest" description="Disordered" evidence="3">
    <location>
        <begin position="291"/>
        <end position="355"/>
    </location>
</feature>
<feature type="compositionally biased region" description="Acidic residues" evidence="3">
    <location>
        <begin position="299"/>
        <end position="314"/>
    </location>
</feature>
<feature type="active site" description="Proton acceptor" evidence="2">
    <location>
        <position position="140"/>
    </location>
</feature>
<feature type="binding site" evidence="2">
    <location>
        <begin position="26"/>
        <end position="34"/>
    </location>
    <ligand>
        <name>ATP</name>
        <dbReference type="ChEBI" id="CHEBI:30616"/>
    </ligand>
</feature>
<feature type="binding site" evidence="2">
    <location>
        <position position="49"/>
    </location>
    <ligand>
        <name>ATP</name>
        <dbReference type="ChEBI" id="CHEBI:30616"/>
    </ligand>
</feature>
<feature type="modified residue" description="Phosphothreonine; by autocatalysis" evidence="4">
    <location>
        <position position="174"/>
    </location>
</feature>
<feature type="modified residue" description="Phosphoserine" evidence="1">
    <location>
        <position position="278"/>
    </location>
</feature>
<feature type="splice variant" id="VSP_054683" description="In isoform 3." evidence="7">
    <location>
        <begin position="1"/>
        <end position="94"/>
    </location>
</feature>
<feature type="splice variant" id="VSP_054397" description="In isoform 2." evidence="7">
    <location>
        <begin position="11"/>
        <end position="87"/>
    </location>
</feature>
<feature type="sequence variant" id="VAR_051674" description="In dbSNP:rs34341643.">
    <original>Q</original>
    <variation>H</variation>
    <location>
        <position position="64"/>
    </location>
</feature>
<feature type="mutagenesis site" description="Loss of kinase activity and autophosphorylation." evidence="4">
    <original>K</original>
    <variation>R</variation>
    <location>
        <position position="49"/>
    </location>
</feature>
<feature type="mutagenesis site" description="Loss of kinase activity." evidence="4">
    <original>D</original>
    <variation>A</variation>
    <location>
        <position position="158"/>
    </location>
</feature>
<feature type="sequence conflict" description="In Ref. 1; CAA67700." evidence="8" ref="1">
    <original>EP</original>
    <variation>DA</variation>
    <location>
        <begin position="347"/>
        <end position="348"/>
    </location>
</feature>
<feature type="turn" evidence="11">
    <location>
        <begin position="5"/>
        <end position="7"/>
    </location>
</feature>
<feature type="helix" evidence="11">
    <location>
        <begin position="8"/>
        <end position="10"/>
    </location>
</feature>
<feature type="helix" evidence="11">
    <location>
        <begin position="16"/>
        <end position="18"/>
    </location>
</feature>
<feature type="strand" evidence="11">
    <location>
        <begin position="20"/>
        <end position="27"/>
    </location>
</feature>
<feature type="strand" evidence="11">
    <location>
        <begin position="32"/>
        <end position="39"/>
    </location>
</feature>
<feature type="turn" evidence="11">
    <location>
        <begin position="40"/>
        <end position="42"/>
    </location>
</feature>
<feature type="strand" evidence="11">
    <location>
        <begin position="45"/>
        <end position="52"/>
    </location>
</feature>
<feature type="turn" evidence="11">
    <location>
        <begin position="53"/>
        <end position="56"/>
    </location>
</feature>
<feature type="helix" evidence="11">
    <location>
        <begin position="57"/>
        <end position="59"/>
    </location>
</feature>
<feature type="helix" evidence="11">
    <location>
        <begin position="60"/>
        <end position="71"/>
    </location>
</feature>
<feature type="strand" evidence="11">
    <location>
        <begin position="81"/>
        <end position="87"/>
    </location>
</feature>
<feature type="strand" evidence="11">
    <location>
        <begin position="90"/>
        <end position="96"/>
    </location>
</feature>
<feature type="helix" evidence="11">
    <location>
        <begin position="103"/>
        <end position="106"/>
    </location>
</feature>
<feature type="turn" evidence="11">
    <location>
        <begin position="107"/>
        <end position="109"/>
    </location>
</feature>
<feature type="helix" evidence="11">
    <location>
        <begin position="114"/>
        <end position="133"/>
    </location>
</feature>
<feature type="helix" evidence="11">
    <location>
        <begin position="143"/>
        <end position="145"/>
    </location>
</feature>
<feature type="strand" evidence="11">
    <location>
        <begin position="146"/>
        <end position="148"/>
    </location>
</feature>
<feature type="strand" evidence="11">
    <location>
        <begin position="154"/>
        <end position="156"/>
    </location>
</feature>
<feature type="strand" evidence="11">
    <location>
        <begin position="170"/>
        <end position="172"/>
    </location>
</feature>
<feature type="helix" evidence="11">
    <location>
        <begin position="179"/>
        <end position="181"/>
    </location>
</feature>
<feature type="helix" evidence="11">
    <location>
        <begin position="184"/>
        <end position="187"/>
    </location>
</feature>
<feature type="helix" evidence="11">
    <location>
        <begin position="195"/>
        <end position="210"/>
    </location>
</feature>
<feature type="turn" evidence="11">
    <location>
        <begin position="214"/>
        <end position="217"/>
    </location>
</feature>
<feature type="helix" evidence="11">
    <location>
        <begin position="220"/>
        <end position="226"/>
    </location>
</feature>
<feature type="turn" evidence="11">
    <location>
        <begin position="227"/>
        <end position="229"/>
    </location>
</feature>
<feature type="helix" evidence="11">
    <location>
        <begin position="241"/>
        <end position="250"/>
    </location>
</feature>
<feature type="helix" evidence="11">
    <location>
        <begin position="255"/>
        <end position="257"/>
    </location>
</feature>
<feature type="helix" evidence="11">
    <location>
        <begin position="261"/>
        <end position="264"/>
    </location>
</feature>
<feature type="helix" evidence="11">
    <location>
        <begin position="268"/>
        <end position="273"/>
    </location>
</feature>
<feature type="helix" evidence="11">
    <location>
        <begin position="277"/>
        <end position="280"/>
    </location>
</feature>
<feature type="helix" evidence="11">
    <location>
        <begin position="281"/>
        <end position="292"/>
    </location>
</feature>
<feature type="helix" evidence="10">
    <location>
        <begin position="357"/>
        <end position="360"/>
    </location>
</feature>
<feature type="helix" evidence="10">
    <location>
        <begin position="362"/>
        <end position="374"/>
    </location>
</feature>
<feature type="turn" evidence="10">
    <location>
        <begin position="375"/>
        <end position="377"/>
    </location>
</feature>
<feature type="helix" evidence="10">
    <location>
        <begin position="381"/>
        <end position="396"/>
    </location>
</feature>
<feature type="helix" evidence="10">
    <location>
        <begin position="400"/>
        <end position="414"/>
    </location>
</feature>
<name>STK25_HUMAN</name>
<organism>
    <name type="scientific">Homo sapiens</name>
    <name type="common">Human</name>
    <dbReference type="NCBI Taxonomy" id="9606"/>
    <lineage>
        <taxon>Eukaryota</taxon>
        <taxon>Metazoa</taxon>
        <taxon>Chordata</taxon>
        <taxon>Craniata</taxon>
        <taxon>Vertebrata</taxon>
        <taxon>Euteleostomi</taxon>
        <taxon>Mammalia</taxon>
        <taxon>Eutheria</taxon>
        <taxon>Euarchontoglires</taxon>
        <taxon>Primates</taxon>
        <taxon>Haplorrhini</taxon>
        <taxon>Catarrhini</taxon>
        <taxon>Hominidae</taxon>
        <taxon>Homo</taxon>
    </lineage>
</organism>
<sequence length="426" mass="48112">MAHLRGFANQHSRVDPEELFTKLDRIGKGSFGEVYKGIDNHTKEVVAIKIIDLEEAEDEIEDIQQEITVLSQCDSPYITRYFGSYLKSTKLWIIMEYLGGGSALDLLKPGPLEETYIATILREILKGLDYLHSERKIHRDIKAANVLLSEQGDVKLADFGVAGQLTDTQIKRNTFVGTPFWMAPEVIKQSAYDFKADIWSLGITAIELAKGEPPNSDLHPMRVLFLIPKNSPPTLEGQHSKPFKEFVEACLNKDPRFRPTAKELLKHKFITRYTKKTSFLTELIDRYKRWKSEGHGEESSSEDSDIDGEAEDGEQGPIWTFPPTIRPSPHSKLHKGTALHSSQKPAEPVKRQPRSQCLSTLVRPVFGELKEKHKQSGGSVGALEELENAFSLAEESCPGISDKLMVHLVERVQRFSHNRNHLTSTR</sequence>
<gene>
    <name evidence="9" type="primary">STK25</name>
    <name type="synonym">SOK1</name>
    <name type="synonym">YSK1</name>
</gene>
<keyword id="KW-0002">3D-structure</keyword>
<keyword id="KW-0025">Alternative splicing</keyword>
<keyword id="KW-0067">ATP-binding</keyword>
<keyword id="KW-0963">Cytoplasm</keyword>
<keyword id="KW-0333">Golgi apparatus</keyword>
<keyword id="KW-0418">Kinase</keyword>
<keyword id="KW-0460">Magnesium</keyword>
<keyword id="KW-0479">Metal-binding</keyword>
<keyword id="KW-0547">Nucleotide-binding</keyword>
<keyword id="KW-0597">Phosphoprotein</keyword>
<keyword id="KW-1267">Proteomics identification</keyword>
<keyword id="KW-1185">Reference proteome</keyword>
<keyword id="KW-0723">Serine/threonine-protein kinase</keyword>
<keyword id="KW-0808">Transferase</keyword>
<protein>
    <recommendedName>
        <fullName>Serine/threonine-protein kinase 25</fullName>
        <ecNumber>2.7.11.1</ecNumber>
    </recommendedName>
    <alternativeName>
        <fullName>Ste20-like kinase</fullName>
    </alternativeName>
    <alternativeName>
        <fullName>Sterile 20/oxidant stress-response kinase 1</fullName>
        <shortName>SOK-1</shortName>
        <shortName>Ste20/oxidant stress response kinase 1</shortName>
    </alternativeName>
</protein>